<proteinExistence type="inferred from homology"/>
<reference key="1">
    <citation type="journal article" date="2003" name="Genome Res.">
        <title>Comparative genome analysis of Vibrio vulnificus, a marine pathogen.</title>
        <authorList>
            <person name="Chen C.-Y."/>
            <person name="Wu K.-M."/>
            <person name="Chang Y.-C."/>
            <person name="Chang C.-H."/>
            <person name="Tsai H.-C."/>
            <person name="Liao T.-L."/>
            <person name="Liu Y.-M."/>
            <person name="Chen H.-J."/>
            <person name="Shen A.B.-T."/>
            <person name="Li J.-C."/>
            <person name="Su T.-L."/>
            <person name="Shao C.-P."/>
            <person name="Lee C.-T."/>
            <person name="Hor L.-I."/>
            <person name="Tsai S.-F."/>
        </authorList>
    </citation>
    <scope>NUCLEOTIDE SEQUENCE [LARGE SCALE GENOMIC DNA]</scope>
    <source>
        <strain>YJ016</strain>
    </source>
</reference>
<feature type="chain" id="PRO_0000192712" description="UPF0276 protein VV3194">
    <location>
        <begin position="1"/>
        <end position="291"/>
    </location>
</feature>
<name>Y3194_VIBVY</name>
<evidence type="ECO:0000255" key="1">
    <source>
        <dbReference type="HAMAP-Rule" id="MF_00697"/>
    </source>
</evidence>
<protein>
    <recommendedName>
        <fullName evidence="1">UPF0276 protein VV3194</fullName>
    </recommendedName>
</protein>
<sequence>MSNTEFHPHIGVGLRLPHHDHFHHHRPALSWLEIHSENYFQPNSFHRQQLNQMAEHYQISCHGIGLSLGSVTGVNPQHLLRLKQLVDDLQPFLVSDHLSWSENGGHYFNDLLPLPYTEEALEVFCRNVLHVQDALKRPILIENPSSYLKYQHSTISEWQFLTEVQRRTDCRLLLDLNNVYVSAFNHGFDCQTYLEAIPAACVDEIHLAGFTIKSLEQGEIWIDTHSQPVSAEVWQLYQQWIAQHGSRHTLIEWDLDLPPVDVLLNEAKKAETLLRASLLHNNPMHPSLALG</sequence>
<organism>
    <name type="scientific">Vibrio vulnificus (strain YJ016)</name>
    <dbReference type="NCBI Taxonomy" id="196600"/>
    <lineage>
        <taxon>Bacteria</taxon>
        <taxon>Pseudomonadati</taxon>
        <taxon>Pseudomonadota</taxon>
        <taxon>Gammaproteobacteria</taxon>
        <taxon>Vibrionales</taxon>
        <taxon>Vibrionaceae</taxon>
        <taxon>Vibrio</taxon>
    </lineage>
</organism>
<comment type="similarity">
    <text evidence="1">Belongs to the UPF0276 family.</text>
</comment>
<accession>Q7MGN5</accession>
<dbReference type="EMBL" id="BA000037">
    <property type="protein sequence ID" value="BAC95959.1"/>
    <property type="molecule type" value="Genomic_DNA"/>
</dbReference>
<dbReference type="RefSeq" id="WP_011151406.1">
    <property type="nucleotide sequence ID" value="NC_005139.1"/>
</dbReference>
<dbReference type="SMR" id="Q7MGN5"/>
<dbReference type="STRING" id="672.VV93_v1c29150"/>
<dbReference type="KEGG" id="vvy:VV3194"/>
<dbReference type="PATRIC" id="fig|196600.6.peg.3162"/>
<dbReference type="eggNOG" id="COG3220">
    <property type="taxonomic scope" value="Bacteria"/>
</dbReference>
<dbReference type="HOGENOM" id="CLU_064263_0_0_6"/>
<dbReference type="Proteomes" id="UP000002675">
    <property type="component" value="Chromosome I"/>
</dbReference>
<dbReference type="Gene3D" id="3.20.20.150">
    <property type="entry name" value="Divalent-metal-dependent TIM barrel enzymes"/>
    <property type="match status" value="1"/>
</dbReference>
<dbReference type="HAMAP" id="MF_00697">
    <property type="entry name" value="UPF0276"/>
    <property type="match status" value="1"/>
</dbReference>
<dbReference type="InterPro" id="IPR007801">
    <property type="entry name" value="MbnB/TglH/ChrH"/>
</dbReference>
<dbReference type="InterPro" id="IPR036237">
    <property type="entry name" value="Xyl_isomerase-like_sf"/>
</dbReference>
<dbReference type="NCBIfam" id="NF003818">
    <property type="entry name" value="PRK05409.1"/>
    <property type="match status" value="1"/>
</dbReference>
<dbReference type="PANTHER" id="PTHR42194">
    <property type="entry name" value="UPF0276 PROTEIN HI_1600"/>
    <property type="match status" value="1"/>
</dbReference>
<dbReference type="PANTHER" id="PTHR42194:SF1">
    <property type="entry name" value="UPF0276 PROTEIN HI_1600"/>
    <property type="match status" value="1"/>
</dbReference>
<dbReference type="Pfam" id="PF05114">
    <property type="entry name" value="MbnB_TglH_ChrH"/>
    <property type="match status" value="1"/>
</dbReference>
<dbReference type="SUPFAM" id="SSF51658">
    <property type="entry name" value="Xylose isomerase-like"/>
    <property type="match status" value="1"/>
</dbReference>
<gene>
    <name type="ordered locus">VV3194</name>
</gene>